<sequence length="142" mass="15066">MAKKVAGQLKLQVKAGSANPSPPIGPALGQRGINIMEFCKAFNAATQEMEKGMPIPVVITYYQDKSFTFVMKQPPVSYFLKREAKVQAGSKTPGKAKAGSISKAQIRTIAEAKMKDLNAADIDGAMAMVEGSARSMGLEVTG</sequence>
<protein>
    <recommendedName>
        <fullName evidence="1">Large ribosomal subunit protein uL11</fullName>
    </recommendedName>
    <alternativeName>
        <fullName evidence="2">50S ribosomal protein L11</fullName>
    </alternativeName>
</protein>
<gene>
    <name evidence="1" type="primary">rplK</name>
    <name type="ordered locus">R01344</name>
    <name type="ORF">SMc01321</name>
</gene>
<keyword id="KW-0488">Methylation</keyword>
<keyword id="KW-1185">Reference proteome</keyword>
<keyword id="KW-0687">Ribonucleoprotein</keyword>
<keyword id="KW-0689">Ribosomal protein</keyword>
<keyword id="KW-0694">RNA-binding</keyword>
<keyword id="KW-0699">rRNA-binding</keyword>
<name>RL11_RHIME</name>
<evidence type="ECO:0000255" key="1">
    <source>
        <dbReference type="HAMAP-Rule" id="MF_00736"/>
    </source>
</evidence>
<evidence type="ECO:0000305" key="2"/>
<dbReference type="EMBL" id="AL591688">
    <property type="protein sequence ID" value="CAC45923.1"/>
    <property type="molecule type" value="Genomic_DNA"/>
</dbReference>
<dbReference type="RefSeq" id="NP_385450.1">
    <property type="nucleotide sequence ID" value="NC_003047.1"/>
</dbReference>
<dbReference type="RefSeq" id="WP_003536188.1">
    <property type="nucleotide sequence ID" value="NC_003047.1"/>
</dbReference>
<dbReference type="SMR" id="Q92QI1"/>
<dbReference type="EnsemblBacteria" id="CAC45923">
    <property type="protein sequence ID" value="CAC45923"/>
    <property type="gene ID" value="SMc01321"/>
</dbReference>
<dbReference type="GeneID" id="89575668"/>
<dbReference type="KEGG" id="sme:SMc01321"/>
<dbReference type="PATRIC" id="fig|266834.11.peg.2759"/>
<dbReference type="eggNOG" id="COG0080">
    <property type="taxonomic scope" value="Bacteria"/>
</dbReference>
<dbReference type="HOGENOM" id="CLU_074237_2_0_5"/>
<dbReference type="OrthoDB" id="9802408at2"/>
<dbReference type="Proteomes" id="UP000001976">
    <property type="component" value="Chromosome"/>
</dbReference>
<dbReference type="GO" id="GO:0022625">
    <property type="term" value="C:cytosolic large ribosomal subunit"/>
    <property type="evidence" value="ECO:0007669"/>
    <property type="project" value="TreeGrafter"/>
</dbReference>
<dbReference type="GO" id="GO:0070180">
    <property type="term" value="F:large ribosomal subunit rRNA binding"/>
    <property type="evidence" value="ECO:0007669"/>
    <property type="project" value="UniProtKB-UniRule"/>
</dbReference>
<dbReference type="GO" id="GO:0003735">
    <property type="term" value="F:structural constituent of ribosome"/>
    <property type="evidence" value="ECO:0007669"/>
    <property type="project" value="InterPro"/>
</dbReference>
<dbReference type="GO" id="GO:0006412">
    <property type="term" value="P:translation"/>
    <property type="evidence" value="ECO:0007669"/>
    <property type="project" value="UniProtKB-UniRule"/>
</dbReference>
<dbReference type="CDD" id="cd00349">
    <property type="entry name" value="Ribosomal_L11"/>
    <property type="match status" value="1"/>
</dbReference>
<dbReference type="FunFam" id="1.10.10.250:FF:000001">
    <property type="entry name" value="50S ribosomal protein L11"/>
    <property type="match status" value="1"/>
</dbReference>
<dbReference type="FunFam" id="3.30.1550.10:FF:000001">
    <property type="entry name" value="50S ribosomal protein L11"/>
    <property type="match status" value="1"/>
</dbReference>
<dbReference type="Gene3D" id="1.10.10.250">
    <property type="entry name" value="Ribosomal protein L11, C-terminal domain"/>
    <property type="match status" value="1"/>
</dbReference>
<dbReference type="Gene3D" id="3.30.1550.10">
    <property type="entry name" value="Ribosomal protein L11/L12, N-terminal domain"/>
    <property type="match status" value="1"/>
</dbReference>
<dbReference type="HAMAP" id="MF_00736">
    <property type="entry name" value="Ribosomal_uL11"/>
    <property type="match status" value="1"/>
</dbReference>
<dbReference type="InterPro" id="IPR000911">
    <property type="entry name" value="Ribosomal_uL11"/>
</dbReference>
<dbReference type="InterPro" id="IPR006519">
    <property type="entry name" value="Ribosomal_uL11_bac-typ"/>
</dbReference>
<dbReference type="InterPro" id="IPR020783">
    <property type="entry name" value="Ribosomal_uL11_C"/>
</dbReference>
<dbReference type="InterPro" id="IPR036769">
    <property type="entry name" value="Ribosomal_uL11_C_sf"/>
</dbReference>
<dbReference type="InterPro" id="IPR020784">
    <property type="entry name" value="Ribosomal_uL11_N"/>
</dbReference>
<dbReference type="InterPro" id="IPR036796">
    <property type="entry name" value="Ribosomal_uL11_N_sf"/>
</dbReference>
<dbReference type="NCBIfam" id="TIGR01632">
    <property type="entry name" value="L11_bact"/>
    <property type="match status" value="1"/>
</dbReference>
<dbReference type="PANTHER" id="PTHR11661">
    <property type="entry name" value="60S RIBOSOMAL PROTEIN L12"/>
    <property type="match status" value="1"/>
</dbReference>
<dbReference type="PANTHER" id="PTHR11661:SF1">
    <property type="entry name" value="LARGE RIBOSOMAL SUBUNIT PROTEIN UL11M"/>
    <property type="match status" value="1"/>
</dbReference>
<dbReference type="Pfam" id="PF00298">
    <property type="entry name" value="Ribosomal_L11"/>
    <property type="match status" value="1"/>
</dbReference>
<dbReference type="Pfam" id="PF03946">
    <property type="entry name" value="Ribosomal_L11_N"/>
    <property type="match status" value="1"/>
</dbReference>
<dbReference type="SMART" id="SM00649">
    <property type="entry name" value="RL11"/>
    <property type="match status" value="1"/>
</dbReference>
<dbReference type="SUPFAM" id="SSF54747">
    <property type="entry name" value="Ribosomal L11/L12e N-terminal domain"/>
    <property type="match status" value="1"/>
</dbReference>
<dbReference type="SUPFAM" id="SSF46906">
    <property type="entry name" value="Ribosomal protein L11, C-terminal domain"/>
    <property type="match status" value="1"/>
</dbReference>
<reference key="1">
    <citation type="journal article" date="2001" name="Proc. Natl. Acad. Sci. U.S.A.">
        <title>Analysis of the chromosome sequence of the legume symbiont Sinorhizobium meliloti strain 1021.</title>
        <authorList>
            <person name="Capela D."/>
            <person name="Barloy-Hubler F."/>
            <person name="Gouzy J."/>
            <person name="Bothe G."/>
            <person name="Ampe F."/>
            <person name="Batut J."/>
            <person name="Boistard P."/>
            <person name="Becker A."/>
            <person name="Boutry M."/>
            <person name="Cadieu E."/>
            <person name="Dreano S."/>
            <person name="Gloux S."/>
            <person name="Godrie T."/>
            <person name="Goffeau A."/>
            <person name="Kahn D."/>
            <person name="Kiss E."/>
            <person name="Lelaure V."/>
            <person name="Masuy D."/>
            <person name="Pohl T."/>
            <person name="Portetelle D."/>
            <person name="Puehler A."/>
            <person name="Purnelle B."/>
            <person name="Ramsperger U."/>
            <person name="Renard C."/>
            <person name="Thebault P."/>
            <person name="Vandenbol M."/>
            <person name="Weidner S."/>
            <person name="Galibert F."/>
        </authorList>
    </citation>
    <scope>NUCLEOTIDE SEQUENCE [LARGE SCALE GENOMIC DNA]</scope>
    <source>
        <strain>1021</strain>
    </source>
</reference>
<reference key="2">
    <citation type="journal article" date="2001" name="Science">
        <title>The composite genome of the legume symbiont Sinorhizobium meliloti.</title>
        <authorList>
            <person name="Galibert F."/>
            <person name="Finan T.M."/>
            <person name="Long S.R."/>
            <person name="Puehler A."/>
            <person name="Abola P."/>
            <person name="Ampe F."/>
            <person name="Barloy-Hubler F."/>
            <person name="Barnett M.J."/>
            <person name="Becker A."/>
            <person name="Boistard P."/>
            <person name="Bothe G."/>
            <person name="Boutry M."/>
            <person name="Bowser L."/>
            <person name="Buhrmester J."/>
            <person name="Cadieu E."/>
            <person name="Capela D."/>
            <person name="Chain P."/>
            <person name="Cowie A."/>
            <person name="Davis R.W."/>
            <person name="Dreano S."/>
            <person name="Federspiel N.A."/>
            <person name="Fisher R.F."/>
            <person name="Gloux S."/>
            <person name="Godrie T."/>
            <person name="Goffeau A."/>
            <person name="Golding B."/>
            <person name="Gouzy J."/>
            <person name="Gurjal M."/>
            <person name="Hernandez-Lucas I."/>
            <person name="Hong A."/>
            <person name="Huizar L."/>
            <person name="Hyman R.W."/>
            <person name="Jones T."/>
            <person name="Kahn D."/>
            <person name="Kahn M.L."/>
            <person name="Kalman S."/>
            <person name="Keating D.H."/>
            <person name="Kiss E."/>
            <person name="Komp C."/>
            <person name="Lelaure V."/>
            <person name="Masuy D."/>
            <person name="Palm C."/>
            <person name="Peck M.C."/>
            <person name="Pohl T.M."/>
            <person name="Portetelle D."/>
            <person name="Purnelle B."/>
            <person name="Ramsperger U."/>
            <person name="Surzycki R."/>
            <person name="Thebault P."/>
            <person name="Vandenbol M."/>
            <person name="Vorhoelter F.J."/>
            <person name="Weidner S."/>
            <person name="Wells D.H."/>
            <person name="Wong K."/>
            <person name="Yeh K.-C."/>
            <person name="Batut J."/>
        </authorList>
    </citation>
    <scope>NUCLEOTIDE SEQUENCE [LARGE SCALE GENOMIC DNA]</scope>
    <source>
        <strain>1021</strain>
    </source>
</reference>
<organism>
    <name type="scientific">Rhizobium meliloti (strain 1021)</name>
    <name type="common">Ensifer meliloti</name>
    <name type="synonym">Sinorhizobium meliloti</name>
    <dbReference type="NCBI Taxonomy" id="266834"/>
    <lineage>
        <taxon>Bacteria</taxon>
        <taxon>Pseudomonadati</taxon>
        <taxon>Pseudomonadota</taxon>
        <taxon>Alphaproteobacteria</taxon>
        <taxon>Hyphomicrobiales</taxon>
        <taxon>Rhizobiaceae</taxon>
        <taxon>Sinorhizobium/Ensifer group</taxon>
        <taxon>Sinorhizobium</taxon>
    </lineage>
</organism>
<accession>Q92QI1</accession>
<feature type="chain" id="PRO_0000104348" description="Large ribosomal subunit protein uL11">
    <location>
        <begin position="1"/>
        <end position="142"/>
    </location>
</feature>
<comment type="function">
    <text evidence="1">Forms part of the ribosomal stalk which helps the ribosome interact with GTP-bound translation factors.</text>
</comment>
<comment type="subunit">
    <text evidence="1">Part of the ribosomal stalk of the 50S ribosomal subunit. Interacts with L10 and the large rRNA to form the base of the stalk. L10 forms an elongated spine to which L12 dimers bind in a sequential fashion forming a multimeric L10(L12)X complex.</text>
</comment>
<comment type="PTM">
    <text evidence="1">One or more lysine residues are methylated.</text>
</comment>
<comment type="similarity">
    <text evidence="1">Belongs to the universal ribosomal protein uL11 family.</text>
</comment>
<proteinExistence type="inferred from homology"/>